<keyword id="KW-0067">ATP-binding</keyword>
<keyword id="KW-0131">Cell cycle</keyword>
<keyword id="KW-0132">Cell division</keyword>
<keyword id="KW-0133">Cell shape</keyword>
<keyword id="KW-0961">Cell wall biogenesis/degradation</keyword>
<keyword id="KW-0963">Cytoplasm</keyword>
<keyword id="KW-0436">Ligase</keyword>
<keyword id="KW-0547">Nucleotide-binding</keyword>
<keyword id="KW-0573">Peptidoglycan synthesis</keyword>
<sequence length="465" mass="50640">MQLDKKIINHVHCLGIGGIGVSALAEILLKKGCRVTGSDVSPNKNTERLQRLGAEIIFNHDGTAITQADCAVYSSAIGATNPELMAAKQAKIPLLKRGEMLANLMKEYQSIAVAGAHGKTTTSGMLSHAFVEANLDPTFMVGGVLNNSQTPARVGNGHYFIAEADESDASFLFMHPDIAVVTNIDADHLSTYDGDFNRLKQTYIQFLEQTAQDGVVVLCLDDPILREIAPLLSRRVITYGFSSDAQYRVVDYCQQGIQSLFQIHSPQRKAPLTVKLSMPGQHNALNATAVTAIADVVQMNEPALLKSLADFPGVDRRFTIRGEMILPKGNALIIEDYGHHPNEIKATLAAARAAWPERRMVLVFQPHRYSRTRDLMTEFVSVLAETDWLVLLEVYSAGEMPIPGADGMALIKMMSNGMAQKTTFVPLLQNLPETLQKLSQPNDIIILQGAGNIGSIVTALVQTHG</sequence>
<gene>
    <name evidence="1" type="primary">murC</name>
    <name type="ordered locus">COXBURSA331_A0225</name>
</gene>
<comment type="function">
    <text evidence="1">Cell wall formation.</text>
</comment>
<comment type="catalytic activity">
    <reaction evidence="1">
        <text>UDP-N-acetyl-alpha-D-muramate + L-alanine + ATP = UDP-N-acetyl-alpha-D-muramoyl-L-alanine + ADP + phosphate + H(+)</text>
        <dbReference type="Rhea" id="RHEA:23372"/>
        <dbReference type="ChEBI" id="CHEBI:15378"/>
        <dbReference type="ChEBI" id="CHEBI:30616"/>
        <dbReference type="ChEBI" id="CHEBI:43474"/>
        <dbReference type="ChEBI" id="CHEBI:57972"/>
        <dbReference type="ChEBI" id="CHEBI:70757"/>
        <dbReference type="ChEBI" id="CHEBI:83898"/>
        <dbReference type="ChEBI" id="CHEBI:456216"/>
        <dbReference type="EC" id="6.3.2.8"/>
    </reaction>
</comment>
<comment type="pathway">
    <text evidence="1">Cell wall biogenesis; peptidoglycan biosynthesis.</text>
</comment>
<comment type="subcellular location">
    <subcellularLocation>
        <location evidence="1">Cytoplasm</location>
    </subcellularLocation>
</comment>
<comment type="similarity">
    <text evidence="1">Belongs to the MurCDEF family.</text>
</comment>
<organism>
    <name type="scientific">Coxiella burnetii (strain RSA 331 / Henzerling II)</name>
    <dbReference type="NCBI Taxonomy" id="360115"/>
    <lineage>
        <taxon>Bacteria</taxon>
        <taxon>Pseudomonadati</taxon>
        <taxon>Pseudomonadota</taxon>
        <taxon>Gammaproteobacteria</taxon>
        <taxon>Legionellales</taxon>
        <taxon>Coxiellaceae</taxon>
        <taxon>Coxiella</taxon>
    </lineage>
</organism>
<evidence type="ECO:0000255" key="1">
    <source>
        <dbReference type="HAMAP-Rule" id="MF_00046"/>
    </source>
</evidence>
<dbReference type="EC" id="6.3.2.8" evidence="1"/>
<dbReference type="EMBL" id="CP000890">
    <property type="protein sequence ID" value="ABX78168.1"/>
    <property type="molecule type" value="Genomic_DNA"/>
</dbReference>
<dbReference type="RefSeq" id="WP_010957397.1">
    <property type="nucleotide sequence ID" value="NC_010117.1"/>
</dbReference>
<dbReference type="SMR" id="A9NA45"/>
<dbReference type="KEGG" id="cbs:COXBURSA331_A0225"/>
<dbReference type="HOGENOM" id="CLU_028104_2_2_6"/>
<dbReference type="UniPathway" id="UPA00219"/>
<dbReference type="GO" id="GO:0005737">
    <property type="term" value="C:cytoplasm"/>
    <property type="evidence" value="ECO:0007669"/>
    <property type="project" value="UniProtKB-SubCell"/>
</dbReference>
<dbReference type="GO" id="GO:0005524">
    <property type="term" value="F:ATP binding"/>
    <property type="evidence" value="ECO:0007669"/>
    <property type="project" value="UniProtKB-UniRule"/>
</dbReference>
<dbReference type="GO" id="GO:0008763">
    <property type="term" value="F:UDP-N-acetylmuramate-L-alanine ligase activity"/>
    <property type="evidence" value="ECO:0007669"/>
    <property type="project" value="UniProtKB-UniRule"/>
</dbReference>
<dbReference type="GO" id="GO:0051301">
    <property type="term" value="P:cell division"/>
    <property type="evidence" value="ECO:0007669"/>
    <property type="project" value="UniProtKB-KW"/>
</dbReference>
<dbReference type="GO" id="GO:0071555">
    <property type="term" value="P:cell wall organization"/>
    <property type="evidence" value="ECO:0007669"/>
    <property type="project" value="UniProtKB-KW"/>
</dbReference>
<dbReference type="GO" id="GO:0009252">
    <property type="term" value="P:peptidoglycan biosynthetic process"/>
    <property type="evidence" value="ECO:0007669"/>
    <property type="project" value="UniProtKB-UniRule"/>
</dbReference>
<dbReference type="GO" id="GO:0008360">
    <property type="term" value="P:regulation of cell shape"/>
    <property type="evidence" value="ECO:0007669"/>
    <property type="project" value="UniProtKB-KW"/>
</dbReference>
<dbReference type="Gene3D" id="3.90.190.20">
    <property type="entry name" value="Mur ligase, C-terminal domain"/>
    <property type="match status" value="1"/>
</dbReference>
<dbReference type="Gene3D" id="3.40.1190.10">
    <property type="entry name" value="Mur-like, catalytic domain"/>
    <property type="match status" value="1"/>
</dbReference>
<dbReference type="Gene3D" id="3.40.50.720">
    <property type="entry name" value="NAD(P)-binding Rossmann-like Domain"/>
    <property type="match status" value="1"/>
</dbReference>
<dbReference type="HAMAP" id="MF_00046">
    <property type="entry name" value="MurC"/>
    <property type="match status" value="1"/>
</dbReference>
<dbReference type="InterPro" id="IPR036565">
    <property type="entry name" value="Mur-like_cat_sf"/>
</dbReference>
<dbReference type="InterPro" id="IPR004101">
    <property type="entry name" value="Mur_ligase_C"/>
</dbReference>
<dbReference type="InterPro" id="IPR036615">
    <property type="entry name" value="Mur_ligase_C_dom_sf"/>
</dbReference>
<dbReference type="InterPro" id="IPR013221">
    <property type="entry name" value="Mur_ligase_cen"/>
</dbReference>
<dbReference type="InterPro" id="IPR000713">
    <property type="entry name" value="Mur_ligase_N"/>
</dbReference>
<dbReference type="InterPro" id="IPR050061">
    <property type="entry name" value="MurCDEF_pg_biosynth"/>
</dbReference>
<dbReference type="InterPro" id="IPR005758">
    <property type="entry name" value="UDP-N-AcMur_Ala_ligase_MurC"/>
</dbReference>
<dbReference type="NCBIfam" id="TIGR01082">
    <property type="entry name" value="murC"/>
    <property type="match status" value="1"/>
</dbReference>
<dbReference type="PANTHER" id="PTHR43445:SF3">
    <property type="entry name" value="UDP-N-ACETYLMURAMATE--L-ALANINE LIGASE"/>
    <property type="match status" value="1"/>
</dbReference>
<dbReference type="PANTHER" id="PTHR43445">
    <property type="entry name" value="UDP-N-ACETYLMURAMATE--L-ALANINE LIGASE-RELATED"/>
    <property type="match status" value="1"/>
</dbReference>
<dbReference type="Pfam" id="PF01225">
    <property type="entry name" value="Mur_ligase"/>
    <property type="match status" value="1"/>
</dbReference>
<dbReference type="Pfam" id="PF02875">
    <property type="entry name" value="Mur_ligase_C"/>
    <property type="match status" value="1"/>
</dbReference>
<dbReference type="Pfam" id="PF08245">
    <property type="entry name" value="Mur_ligase_M"/>
    <property type="match status" value="1"/>
</dbReference>
<dbReference type="SUPFAM" id="SSF51984">
    <property type="entry name" value="MurCD N-terminal domain"/>
    <property type="match status" value="1"/>
</dbReference>
<dbReference type="SUPFAM" id="SSF53623">
    <property type="entry name" value="MurD-like peptide ligases, catalytic domain"/>
    <property type="match status" value="1"/>
</dbReference>
<dbReference type="SUPFAM" id="SSF53244">
    <property type="entry name" value="MurD-like peptide ligases, peptide-binding domain"/>
    <property type="match status" value="1"/>
</dbReference>
<name>MURC_COXBR</name>
<feature type="chain" id="PRO_1000074736" description="UDP-N-acetylmuramate--L-alanine ligase">
    <location>
        <begin position="1"/>
        <end position="465"/>
    </location>
</feature>
<feature type="binding site" evidence="1">
    <location>
        <begin position="115"/>
        <end position="121"/>
    </location>
    <ligand>
        <name>ATP</name>
        <dbReference type="ChEBI" id="CHEBI:30616"/>
    </ligand>
</feature>
<reference key="1">
    <citation type="submission" date="2007-11" db="EMBL/GenBank/DDBJ databases">
        <title>Genome sequencing of phylogenetically and phenotypically diverse Coxiella burnetii isolates.</title>
        <authorList>
            <person name="Seshadri R."/>
            <person name="Samuel J.E."/>
        </authorList>
    </citation>
    <scope>NUCLEOTIDE SEQUENCE [LARGE SCALE GENOMIC DNA]</scope>
    <source>
        <strain>RSA 331 / Henzerling II</strain>
    </source>
</reference>
<proteinExistence type="inferred from homology"/>
<accession>A9NA45</accession>
<protein>
    <recommendedName>
        <fullName evidence="1">UDP-N-acetylmuramate--L-alanine ligase</fullName>
        <ecNumber evidence="1">6.3.2.8</ecNumber>
    </recommendedName>
    <alternativeName>
        <fullName evidence="1">UDP-N-acetylmuramoyl-L-alanine synthetase</fullName>
    </alternativeName>
</protein>